<accession>Q8NV88</accession>
<dbReference type="EMBL" id="BA000033">
    <property type="protein sequence ID" value="BAB96076.1"/>
    <property type="molecule type" value="Genomic_DNA"/>
</dbReference>
<dbReference type="RefSeq" id="WP_000002969.1">
    <property type="nucleotide sequence ID" value="NC_003923.1"/>
</dbReference>
<dbReference type="SMR" id="Q8NV88"/>
<dbReference type="KEGG" id="sam:MW2211"/>
<dbReference type="HOGENOM" id="CLU_072144_1_0_9"/>
<dbReference type="GO" id="GO:0005737">
    <property type="term" value="C:cytoplasm"/>
    <property type="evidence" value="ECO:0007669"/>
    <property type="project" value="UniProtKB-SubCell"/>
</dbReference>
<dbReference type="GO" id="GO:0005525">
    <property type="term" value="F:GTP binding"/>
    <property type="evidence" value="ECO:0007669"/>
    <property type="project" value="UniProtKB-KW"/>
</dbReference>
<dbReference type="GO" id="GO:0003924">
    <property type="term" value="F:GTPase activity"/>
    <property type="evidence" value="ECO:0007669"/>
    <property type="project" value="InterPro"/>
</dbReference>
<dbReference type="GO" id="GO:0016151">
    <property type="term" value="F:nickel cation binding"/>
    <property type="evidence" value="ECO:0007669"/>
    <property type="project" value="UniProtKB-UniRule"/>
</dbReference>
<dbReference type="GO" id="GO:0043419">
    <property type="term" value="P:urea catabolic process"/>
    <property type="evidence" value="ECO:0007669"/>
    <property type="project" value="InterPro"/>
</dbReference>
<dbReference type="CDD" id="cd05540">
    <property type="entry name" value="UreG"/>
    <property type="match status" value="1"/>
</dbReference>
<dbReference type="Gene3D" id="3.40.50.300">
    <property type="entry name" value="P-loop containing nucleotide triphosphate hydrolases"/>
    <property type="match status" value="1"/>
</dbReference>
<dbReference type="HAMAP" id="MF_01389">
    <property type="entry name" value="UreG"/>
    <property type="match status" value="1"/>
</dbReference>
<dbReference type="InterPro" id="IPR003495">
    <property type="entry name" value="CobW/HypB/UreG_nucleotide-bd"/>
</dbReference>
<dbReference type="InterPro" id="IPR027417">
    <property type="entry name" value="P-loop_NTPase"/>
</dbReference>
<dbReference type="InterPro" id="IPR004400">
    <property type="entry name" value="UreG"/>
</dbReference>
<dbReference type="NCBIfam" id="TIGR00101">
    <property type="entry name" value="ureG"/>
    <property type="match status" value="1"/>
</dbReference>
<dbReference type="PANTHER" id="PTHR31715">
    <property type="entry name" value="UREASE ACCESSORY PROTEIN G"/>
    <property type="match status" value="1"/>
</dbReference>
<dbReference type="PANTHER" id="PTHR31715:SF0">
    <property type="entry name" value="UREASE ACCESSORY PROTEIN G"/>
    <property type="match status" value="1"/>
</dbReference>
<dbReference type="Pfam" id="PF02492">
    <property type="entry name" value="cobW"/>
    <property type="match status" value="1"/>
</dbReference>
<dbReference type="PIRSF" id="PIRSF005624">
    <property type="entry name" value="Ni-bind_GTPase"/>
    <property type="match status" value="1"/>
</dbReference>
<dbReference type="SUPFAM" id="SSF52540">
    <property type="entry name" value="P-loop containing nucleoside triphosphate hydrolases"/>
    <property type="match status" value="1"/>
</dbReference>
<keyword id="KW-0143">Chaperone</keyword>
<keyword id="KW-0963">Cytoplasm</keyword>
<keyword id="KW-0342">GTP-binding</keyword>
<keyword id="KW-0996">Nickel insertion</keyword>
<keyword id="KW-0547">Nucleotide-binding</keyword>
<feature type="chain" id="PRO_1000145235" description="Urease accessory protein UreG">
    <location>
        <begin position="1"/>
        <end position="204"/>
    </location>
</feature>
<feature type="binding site" evidence="1">
    <location>
        <begin position="11"/>
        <end position="18"/>
    </location>
    <ligand>
        <name>GTP</name>
        <dbReference type="ChEBI" id="CHEBI:37565"/>
    </ligand>
</feature>
<evidence type="ECO:0000255" key="1">
    <source>
        <dbReference type="HAMAP-Rule" id="MF_01389"/>
    </source>
</evidence>
<gene>
    <name evidence="1" type="primary">ureG</name>
    <name type="ordered locus">MW2211</name>
</gene>
<protein>
    <recommendedName>
        <fullName evidence="1">Urease accessory protein UreG</fullName>
    </recommendedName>
</protein>
<comment type="function">
    <text evidence="1">Facilitates the functional incorporation of the urease nickel metallocenter. This process requires GTP hydrolysis, probably effectuated by UreG.</text>
</comment>
<comment type="subunit">
    <text evidence="1">Homodimer. UreD, UreF and UreG form a complex that acts as a GTP-hydrolysis-dependent molecular chaperone, activating the urease apoprotein by helping to assemble the nickel containing metallocenter of UreC. The UreE protein probably delivers the nickel.</text>
</comment>
<comment type="subcellular location">
    <subcellularLocation>
        <location evidence="1">Cytoplasm</location>
    </subcellularLocation>
</comment>
<comment type="similarity">
    <text evidence="1">Belongs to the SIMIBI class G3E GTPase family. UreG subfamily.</text>
</comment>
<organism>
    <name type="scientific">Staphylococcus aureus (strain MW2)</name>
    <dbReference type="NCBI Taxonomy" id="196620"/>
    <lineage>
        <taxon>Bacteria</taxon>
        <taxon>Bacillati</taxon>
        <taxon>Bacillota</taxon>
        <taxon>Bacilli</taxon>
        <taxon>Bacillales</taxon>
        <taxon>Staphylococcaceae</taxon>
        <taxon>Staphylococcus</taxon>
    </lineage>
</organism>
<sequence>MANPIKIGIGGPVGAGKTQLIEKVVKRLSKEMSIGVITNDIYTKEDEKILVNSGVLPESRIIGVETGGCPHTAIREDASMNFAAIDELLERHDDIELIFIESGGDNLAATFSPELVDFSIYIIDVAQGEKIPRKGGQGMIKSDFFIINKTDLAPYVGASLEQMAEDTKVFRGKRPFTFTNLKTDEGLDEVIDWIERDTLLKGLS</sequence>
<proteinExistence type="inferred from homology"/>
<name>UREG_STAAW</name>
<reference key="1">
    <citation type="journal article" date="2002" name="Lancet">
        <title>Genome and virulence determinants of high virulence community-acquired MRSA.</title>
        <authorList>
            <person name="Baba T."/>
            <person name="Takeuchi F."/>
            <person name="Kuroda M."/>
            <person name="Yuzawa H."/>
            <person name="Aoki K."/>
            <person name="Oguchi A."/>
            <person name="Nagai Y."/>
            <person name="Iwama N."/>
            <person name="Asano K."/>
            <person name="Naimi T."/>
            <person name="Kuroda H."/>
            <person name="Cui L."/>
            <person name="Yamamoto K."/>
            <person name="Hiramatsu K."/>
        </authorList>
    </citation>
    <scope>NUCLEOTIDE SEQUENCE [LARGE SCALE GENOMIC DNA]</scope>
    <source>
        <strain>MW2</strain>
    </source>
</reference>